<protein>
    <recommendedName>
        <fullName evidence="1">7-cyano-7-deazaguanine synthase</fullName>
        <ecNumber evidence="1">6.3.4.20</ecNumber>
    </recommendedName>
    <alternativeName>
        <fullName evidence="1">7-cyano-7-carbaguanine synthase</fullName>
    </alternativeName>
    <alternativeName>
        <fullName evidence="1">PreQ(0) synthase</fullName>
    </alternativeName>
    <alternativeName>
        <fullName evidence="1">Queuosine biosynthesis protein QueC</fullName>
    </alternativeName>
</protein>
<gene>
    <name evidence="1" type="primary">queC</name>
    <name type="ordered locus">ECS88_0441</name>
</gene>
<feature type="chain" id="PRO_1000186588" description="7-cyano-7-deazaguanine synthase">
    <location>
        <begin position="1"/>
        <end position="231"/>
    </location>
</feature>
<feature type="binding site" evidence="1">
    <location>
        <begin position="8"/>
        <end position="18"/>
    </location>
    <ligand>
        <name>ATP</name>
        <dbReference type="ChEBI" id="CHEBI:30616"/>
    </ligand>
</feature>
<feature type="binding site" evidence="1">
    <location>
        <position position="188"/>
    </location>
    <ligand>
        <name>Zn(2+)</name>
        <dbReference type="ChEBI" id="CHEBI:29105"/>
    </ligand>
</feature>
<feature type="binding site" evidence="1">
    <location>
        <position position="197"/>
    </location>
    <ligand>
        <name>Zn(2+)</name>
        <dbReference type="ChEBI" id="CHEBI:29105"/>
    </ligand>
</feature>
<feature type="binding site" evidence="1">
    <location>
        <position position="200"/>
    </location>
    <ligand>
        <name>Zn(2+)</name>
        <dbReference type="ChEBI" id="CHEBI:29105"/>
    </ligand>
</feature>
<feature type="binding site" evidence="1">
    <location>
        <position position="203"/>
    </location>
    <ligand>
        <name>Zn(2+)</name>
        <dbReference type="ChEBI" id="CHEBI:29105"/>
    </ligand>
</feature>
<reference key="1">
    <citation type="journal article" date="2009" name="PLoS Genet.">
        <title>Organised genome dynamics in the Escherichia coli species results in highly diverse adaptive paths.</title>
        <authorList>
            <person name="Touchon M."/>
            <person name="Hoede C."/>
            <person name="Tenaillon O."/>
            <person name="Barbe V."/>
            <person name="Baeriswyl S."/>
            <person name="Bidet P."/>
            <person name="Bingen E."/>
            <person name="Bonacorsi S."/>
            <person name="Bouchier C."/>
            <person name="Bouvet O."/>
            <person name="Calteau A."/>
            <person name="Chiapello H."/>
            <person name="Clermont O."/>
            <person name="Cruveiller S."/>
            <person name="Danchin A."/>
            <person name="Diard M."/>
            <person name="Dossat C."/>
            <person name="Karoui M.E."/>
            <person name="Frapy E."/>
            <person name="Garry L."/>
            <person name="Ghigo J.M."/>
            <person name="Gilles A.M."/>
            <person name="Johnson J."/>
            <person name="Le Bouguenec C."/>
            <person name="Lescat M."/>
            <person name="Mangenot S."/>
            <person name="Martinez-Jehanne V."/>
            <person name="Matic I."/>
            <person name="Nassif X."/>
            <person name="Oztas S."/>
            <person name="Petit M.A."/>
            <person name="Pichon C."/>
            <person name="Rouy Z."/>
            <person name="Ruf C.S."/>
            <person name="Schneider D."/>
            <person name="Tourret J."/>
            <person name="Vacherie B."/>
            <person name="Vallenet D."/>
            <person name="Medigue C."/>
            <person name="Rocha E.P.C."/>
            <person name="Denamur E."/>
        </authorList>
    </citation>
    <scope>NUCLEOTIDE SEQUENCE [LARGE SCALE GENOMIC DNA]</scope>
    <source>
        <strain>S88 / ExPEC</strain>
    </source>
</reference>
<evidence type="ECO:0000255" key="1">
    <source>
        <dbReference type="HAMAP-Rule" id="MF_01633"/>
    </source>
</evidence>
<comment type="function">
    <text evidence="1">Catalyzes the ATP-dependent conversion of 7-carboxy-7-deazaguanine (CDG) to 7-cyano-7-deazaguanine (preQ(0)).</text>
</comment>
<comment type="catalytic activity">
    <reaction evidence="1">
        <text>7-carboxy-7-deazaguanine + NH4(+) + ATP = 7-cyano-7-deazaguanine + ADP + phosphate + H2O + H(+)</text>
        <dbReference type="Rhea" id="RHEA:27982"/>
        <dbReference type="ChEBI" id="CHEBI:15377"/>
        <dbReference type="ChEBI" id="CHEBI:15378"/>
        <dbReference type="ChEBI" id="CHEBI:28938"/>
        <dbReference type="ChEBI" id="CHEBI:30616"/>
        <dbReference type="ChEBI" id="CHEBI:43474"/>
        <dbReference type="ChEBI" id="CHEBI:45075"/>
        <dbReference type="ChEBI" id="CHEBI:61036"/>
        <dbReference type="ChEBI" id="CHEBI:456216"/>
        <dbReference type="EC" id="6.3.4.20"/>
    </reaction>
</comment>
<comment type="cofactor">
    <cofactor evidence="1">
        <name>Zn(2+)</name>
        <dbReference type="ChEBI" id="CHEBI:29105"/>
    </cofactor>
    <text evidence="1">Binds 1 zinc ion per subunit.</text>
</comment>
<comment type="pathway">
    <text evidence="1">Purine metabolism; 7-cyano-7-deazaguanine biosynthesis.</text>
</comment>
<comment type="similarity">
    <text evidence="1">Belongs to the QueC family.</text>
</comment>
<sequence length="231" mass="25452">MKRAVVVFSGGQDSTTCLVQALQQYDEVHCVTFDYGQRHRAEIDVARELALKLGARAHKVLDVTLLNELAVSSLTRDSIPVPDYEPEADGIPNTFVPGRNILFLTLAAIYAYQVKAEAVITGVCETDFSGYPDCRDEFVKALNHAVSLGMAKDIRFETPLMWIDKAETWALADYYGKLDLVRNETLTCYNGIKGDGCGHCAACNLRANGLNHYLADKPTVMAAMKQKTGLK</sequence>
<keyword id="KW-0067">ATP-binding</keyword>
<keyword id="KW-0436">Ligase</keyword>
<keyword id="KW-0479">Metal-binding</keyword>
<keyword id="KW-0547">Nucleotide-binding</keyword>
<keyword id="KW-0671">Queuosine biosynthesis</keyword>
<keyword id="KW-1185">Reference proteome</keyword>
<keyword id="KW-0862">Zinc</keyword>
<dbReference type="EC" id="6.3.4.20" evidence="1"/>
<dbReference type="EMBL" id="CU928161">
    <property type="protein sequence ID" value="CAR01788.1"/>
    <property type="molecule type" value="Genomic_DNA"/>
</dbReference>
<dbReference type="RefSeq" id="WP_000817227.1">
    <property type="nucleotide sequence ID" value="NC_011742.1"/>
</dbReference>
<dbReference type="SMR" id="B7MDA3"/>
<dbReference type="GeneID" id="86862989"/>
<dbReference type="KEGG" id="ecz:ECS88_0441"/>
<dbReference type="HOGENOM" id="CLU_081854_0_0_6"/>
<dbReference type="UniPathway" id="UPA00391"/>
<dbReference type="Proteomes" id="UP000000747">
    <property type="component" value="Chromosome"/>
</dbReference>
<dbReference type="GO" id="GO:0005524">
    <property type="term" value="F:ATP binding"/>
    <property type="evidence" value="ECO:0007669"/>
    <property type="project" value="UniProtKB-UniRule"/>
</dbReference>
<dbReference type="GO" id="GO:0016879">
    <property type="term" value="F:ligase activity, forming carbon-nitrogen bonds"/>
    <property type="evidence" value="ECO:0007669"/>
    <property type="project" value="UniProtKB-UniRule"/>
</dbReference>
<dbReference type="GO" id="GO:0008270">
    <property type="term" value="F:zinc ion binding"/>
    <property type="evidence" value="ECO:0007669"/>
    <property type="project" value="UniProtKB-UniRule"/>
</dbReference>
<dbReference type="GO" id="GO:0008616">
    <property type="term" value="P:queuosine biosynthetic process"/>
    <property type="evidence" value="ECO:0007669"/>
    <property type="project" value="UniProtKB-UniRule"/>
</dbReference>
<dbReference type="CDD" id="cd01995">
    <property type="entry name" value="QueC-like"/>
    <property type="match status" value="1"/>
</dbReference>
<dbReference type="FunFam" id="3.40.50.620:FF:000017">
    <property type="entry name" value="7-cyano-7-deazaguanine synthase"/>
    <property type="match status" value="1"/>
</dbReference>
<dbReference type="Gene3D" id="3.40.50.620">
    <property type="entry name" value="HUPs"/>
    <property type="match status" value="1"/>
</dbReference>
<dbReference type="HAMAP" id="MF_01633">
    <property type="entry name" value="QueC"/>
    <property type="match status" value="1"/>
</dbReference>
<dbReference type="InterPro" id="IPR018317">
    <property type="entry name" value="QueC"/>
</dbReference>
<dbReference type="InterPro" id="IPR014729">
    <property type="entry name" value="Rossmann-like_a/b/a_fold"/>
</dbReference>
<dbReference type="NCBIfam" id="TIGR00364">
    <property type="entry name" value="7-cyano-7-deazaguanine synthase QueC"/>
    <property type="match status" value="1"/>
</dbReference>
<dbReference type="NCBIfam" id="NF008317">
    <property type="entry name" value="PRK11106.1"/>
    <property type="match status" value="1"/>
</dbReference>
<dbReference type="PANTHER" id="PTHR42914">
    <property type="entry name" value="7-CYANO-7-DEAZAGUANINE SYNTHASE"/>
    <property type="match status" value="1"/>
</dbReference>
<dbReference type="PANTHER" id="PTHR42914:SF1">
    <property type="entry name" value="7-CYANO-7-DEAZAGUANINE SYNTHASE"/>
    <property type="match status" value="1"/>
</dbReference>
<dbReference type="Pfam" id="PF06508">
    <property type="entry name" value="QueC"/>
    <property type="match status" value="1"/>
</dbReference>
<dbReference type="PIRSF" id="PIRSF006293">
    <property type="entry name" value="ExsB"/>
    <property type="match status" value="1"/>
</dbReference>
<dbReference type="SUPFAM" id="SSF52402">
    <property type="entry name" value="Adenine nucleotide alpha hydrolases-like"/>
    <property type="match status" value="1"/>
</dbReference>
<organism>
    <name type="scientific">Escherichia coli O45:K1 (strain S88 / ExPEC)</name>
    <dbReference type="NCBI Taxonomy" id="585035"/>
    <lineage>
        <taxon>Bacteria</taxon>
        <taxon>Pseudomonadati</taxon>
        <taxon>Pseudomonadota</taxon>
        <taxon>Gammaproteobacteria</taxon>
        <taxon>Enterobacterales</taxon>
        <taxon>Enterobacteriaceae</taxon>
        <taxon>Escherichia</taxon>
    </lineage>
</organism>
<name>QUEC_ECO45</name>
<accession>B7MDA3</accession>
<proteinExistence type="inferred from homology"/>